<evidence type="ECO:0000250" key="1"/>
<evidence type="ECO:0000305" key="2"/>
<reference key="1">
    <citation type="journal article" date="2005" name="Nature">
        <title>The genome of the social amoeba Dictyostelium discoideum.</title>
        <authorList>
            <person name="Eichinger L."/>
            <person name="Pachebat J.A."/>
            <person name="Gloeckner G."/>
            <person name="Rajandream M.A."/>
            <person name="Sucgang R."/>
            <person name="Berriman M."/>
            <person name="Song J."/>
            <person name="Olsen R."/>
            <person name="Szafranski K."/>
            <person name="Xu Q."/>
            <person name="Tunggal B."/>
            <person name="Kummerfeld S."/>
            <person name="Madera M."/>
            <person name="Konfortov B.A."/>
            <person name="Rivero F."/>
            <person name="Bankier A.T."/>
            <person name="Lehmann R."/>
            <person name="Hamlin N."/>
            <person name="Davies R."/>
            <person name="Gaudet P."/>
            <person name="Fey P."/>
            <person name="Pilcher K."/>
            <person name="Chen G."/>
            <person name="Saunders D."/>
            <person name="Sodergren E.J."/>
            <person name="Davis P."/>
            <person name="Kerhornou A."/>
            <person name="Nie X."/>
            <person name="Hall N."/>
            <person name="Anjard C."/>
            <person name="Hemphill L."/>
            <person name="Bason N."/>
            <person name="Farbrother P."/>
            <person name="Desany B."/>
            <person name="Just E."/>
            <person name="Morio T."/>
            <person name="Rost R."/>
            <person name="Churcher C.M."/>
            <person name="Cooper J."/>
            <person name="Haydock S."/>
            <person name="van Driessche N."/>
            <person name="Cronin A."/>
            <person name="Goodhead I."/>
            <person name="Muzny D.M."/>
            <person name="Mourier T."/>
            <person name="Pain A."/>
            <person name="Lu M."/>
            <person name="Harper D."/>
            <person name="Lindsay R."/>
            <person name="Hauser H."/>
            <person name="James K.D."/>
            <person name="Quiles M."/>
            <person name="Madan Babu M."/>
            <person name="Saito T."/>
            <person name="Buchrieser C."/>
            <person name="Wardroper A."/>
            <person name="Felder M."/>
            <person name="Thangavelu M."/>
            <person name="Johnson D."/>
            <person name="Knights A."/>
            <person name="Loulseged H."/>
            <person name="Mungall K.L."/>
            <person name="Oliver K."/>
            <person name="Price C."/>
            <person name="Quail M.A."/>
            <person name="Urushihara H."/>
            <person name="Hernandez J."/>
            <person name="Rabbinowitsch E."/>
            <person name="Steffen D."/>
            <person name="Sanders M."/>
            <person name="Ma J."/>
            <person name="Kohara Y."/>
            <person name="Sharp S."/>
            <person name="Simmonds M.N."/>
            <person name="Spiegler S."/>
            <person name="Tivey A."/>
            <person name="Sugano S."/>
            <person name="White B."/>
            <person name="Walker D."/>
            <person name="Woodward J.R."/>
            <person name="Winckler T."/>
            <person name="Tanaka Y."/>
            <person name="Shaulsky G."/>
            <person name="Schleicher M."/>
            <person name="Weinstock G.M."/>
            <person name="Rosenthal A."/>
            <person name="Cox E.C."/>
            <person name="Chisholm R.L."/>
            <person name="Gibbs R.A."/>
            <person name="Loomis W.F."/>
            <person name="Platzer M."/>
            <person name="Kay R.R."/>
            <person name="Williams J.G."/>
            <person name="Dear P.H."/>
            <person name="Noegel A.A."/>
            <person name="Barrell B.G."/>
            <person name="Kuspa A."/>
        </authorList>
    </citation>
    <scope>NUCLEOTIDE SEQUENCE [LARGE SCALE GENOMIC DNA]</scope>
    <source>
        <strain>AX4</strain>
    </source>
</reference>
<accession>P0CC06</accession>
<accession>C7G029</accession>
<comment type="similarity">
    <text evidence="2">Belongs to the mandelate racemase/muconate lactonizing enzyme family.</text>
</comment>
<protein>
    <recommendedName>
        <fullName>Enolase superfamily member DDB_G0284701</fullName>
        <ecNumber>5.-.-.-</ecNumber>
    </recommendedName>
</protein>
<feature type="chain" id="PRO_0000389024" description="Enolase superfamily member DDB_G0284701">
    <location>
        <begin position="1"/>
        <end position="437"/>
    </location>
</feature>
<feature type="active site" description="Proton acceptor" evidence="1">
    <location>
        <position position="217"/>
    </location>
</feature>
<feature type="active site" description="Proton donor" evidence="1">
    <location>
        <position position="395"/>
    </location>
</feature>
<feature type="binding site" evidence="1">
    <location>
        <position position="251"/>
    </location>
    <ligand>
        <name>Mn(2+)</name>
        <dbReference type="ChEBI" id="CHEBI:29035"/>
    </ligand>
</feature>
<feature type="binding site" evidence="1">
    <location>
        <position position="279"/>
    </location>
    <ligand>
        <name>Mn(2+)</name>
        <dbReference type="ChEBI" id="CHEBI:29035"/>
    </ligand>
</feature>
<feature type="binding site" evidence="1">
    <location>
        <position position="321"/>
    </location>
    <ligand>
        <name>Mn(2+)</name>
        <dbReference type="ChEBI" id="CHEBI:29035"/>
    </ligand>
</feature>
<dbReference type="EC" id="5.-.-.-"/>
<dbReference type="EMBL" id="AAFI02000070">
    <property type="protein sequence ID" value="EEU04090.1"/>
    <property type="molecule type" value="Genomic_DNA"/>
</dbReference>
<dbReference type="RefSeq" id="XP_002649142.1">
    <property type="nucleotide sequence ID" value="XM_002649096.1"/>
</dbReference>
<dbReference type="SMR" id="P0CC06"/>
<dbReference type="STRING" id="44689.P0CC06"/>
<dbReference type="PaxDb" id="44689-DDB0252813"/>
<dbReference type="EnsemblProtists" id="EEU04090">
    <property type="protein sequence ID" value="EEU04090"/>
    <property type="gene ID" value="DDB_G0284701"/>
</dbReference>
<dbReference type="GeneID" id="8624736"/>
<dbReference type="KEGG" id="ddi:DDB_G0284701"/>
<dbReference type="dictyBase" id="DDB_G0284701"/>
<dbReference type="VEuPathDB" id="AmoebaDB:DDB_G0284701"/>
<dbReference type="eggNOG" id="ENOG502S1E1">
    <property type="taxonomic scope" value="Eukaryota"/>
</dbReference>
<dbReference type="HOGENOM" id="CLU_712634_0_0_1"/>
<dbReference type="InParanoid" id="P0CC06"/>
<dbReference type="OMA" id="ECALIDW"/>
<dbReference type="PhylomeDB" id="P0CC06"/>
<dbReference type="PRO" id="PR:P0CC06"/>
<dbReference type="Proteomes" id="UP000002195">
    <property type="component" value="Chromosome 4"/>
</dbReference>
<dbReference type="GO" id="GO:0046872">
    <property type="term" value="F:metal ion binding"/>
    <property type="evidence" value="ECO:0007669"/>
    <property type="project" value="UniProtKB-KW"/>
</dbReference>
<dbReference type="GO" id="GO:0016854">
    <property type="term" value="F:racemase and epimerase activity"/>
    <property type="evidence" value="ECO:0000318"/>
    <property type="project" value="GO_Central"/>
</dbReference>
<dbReference type="GO" id="GO:0006518">
    <property type="term" value="P:peptide metabolic process"/>
    <property type="evidence" value="ECO:0000318"/>
    <property type="project" value="GO_Central"/>
</dbReference>
<dbReference type="Gene3D" id="3.20.20.120">
    <property type="entry name" value="Enolase-like C-terminal domain"/>
    <property type="match status" value="1"/>
</dbReference>
<dbReference type="Gene3D" id="3.30.390.10">
    <property type="entry name" value="Enolase-like, N-terminal domain"/>
    <property type="match status" value="1"/>
</dbReference>
<dbReference type="InterPro" id="IPR034593">
    <property type="entry name" value="DgoD-like"/>
</dbReference>
<dbReference type="InterPro" id="IPR036849">
    <property type="entry name" value="Enolase-like_C_sf"/>
</dbReference>
<dbReference type="InterPro" id="IPR029017">
    <property type="entry name" value="Enolase-like_N"/>
</dbReference>
<dbReference type="InterPro" id="IPR029065">
    <property type="entry name" value="Enolase_C-like"/>
</dbReference>
<dbReference type="PANTHER" id="PTHR48080">
    <property type="entry name" value="D-GALACTONATE DEHYDRATASE-RELATED"/>
    <property type="match status" value="1"/>
</dbReference>
<dbReference type="PANTHER" id="PTHR48080:SF3">
    <property type="entry name" value="ENOLASE SUPERFAMILY MEMBER DDB_G0284701"/>
    <property type="match status" value="1"/>
</dbReference>
<dbReference type="Pfam" id="PF13378">
    <property type="entry name" value="MR_MLE_C"/>
    <property type="match status" value="1"/>
</dbReference>
<dbReference type="SUPFAM" id="SSF51604">
    <property type="entry name" value="Enolase C-terminal domain-like"/>
    <property type="match status" value="1"/>
</dbReference>
<dbReference type="SUPFAM" id="SSF54826">
    <property type="entry name" value="Enolase N-terminal domain-like"/>
    <property type="match status" value="1"/>
</dbReference>
<organism>
    <name type="scientific">Dictyostelium discoideum</name>
    <name type="common">Social amoeba</name>
    <dbReference type="NCBI Taxonomy" id="44689"/>
    <lineage>
        <taxon>Eukaryota</taxon>
        <taxon>Amoebozoa</taxon>
        <taxon>Evosea</taxon>
        <taxon>Eumycetozoa</taxon>
        <taxon>Dictyostelia</taxon>
        <taxon>Dictyosteliales</taxon>
        <taxon>Dictyosteliaceae</taxon>
        <taxon>Dictyostelium</taxon>
    </lineage>
</organism>
<keyword id="KW-0413">Isomerase</keyword>
<keyword id="KW-0464">Manganese</keyword>
<keyword id="KW-0479">Metal-binding</keyword>
<keyword id="KW-1185">Reference proteome</keyword>
<proteinExistence type="inferred from homology"/>
<gene>
    <name type="ORF">DDB_G0284701</name>
</gene>
<sequence>MTKMLKFLFKNKINVELSIKQYKLNLRNPFGTAHSVTTTRTNALIEIKVEDIRGFGECGLPPKKPLCYLADYNDIETYFNSWIKEIDEKQKQQQQQQEESYHYDAFNKISQKEYFKELRKEMNGDYQQSVYQFLFECLDNCKENSKDYSYASRCAIEMALLDGWGKFLKQPIYKLINIPESESLKPFYYTISMCPTMEEIMDSTDFGSKYTGFLKIKLDADVEKGMNIIDSVQKRLLNNNSTRTISKISVDANSSWTPSVARKYLEKLSPMADLISMVEQPFPIETLKTVNKDQKIDIQHLNEWVSIKKEYQDKGLLIFADESICTEKDLDGLVQLVHGVNIKLEKTGGIRPGLSTLLKAKELGLKTWIGSMVASSLNVSAAAHLLCSLSDFGGDLDGGLLIDDATQLFENDAFQLLDNGLIKMNSNNYGVGVTLKK</sequence>
<name>Y4701_DICDI</name>